<name>FABZ_RALN1</name>
<comment type="function">
    <text evidence="1">Involved in unsaturated fatty acids biosynthesis. Catalyzes the dehydration of short chain beta-hydroxyacyl-ACPs and long chain saturated and unsaturated beta-hydroxyacyl-ACPs.</text>
</comment>
<comment type="catalytic activity">
    <reaction evidence="1">
        <text>a (3R)-hydroxyacyl-[ACP] = a (2E)-enoyl-[ACP] + H2O</text>
        <dbReference type="Rhea" id="RHEA:13097"/>
        <dbReference type="Rhea" id="RHEA-COMP:9925"/>
        <dbReference type="Rhea" id="RHEA-COMP:9945"/>
        <dbReference type="ChEBI" id="CHEBI:15377"/>
        <dbReference type="ChEBI" id="CHEBI:78784"/>
        <dbReference type="ChEBI" id="CHEBI:78827"/>
        <dbReference type="EC" id="4.2.1.59"/>
    </reaction>
</comment>
<comment type="subcellular location">
    <subcellularLocation>
        <location evidence="1">Cytoplasm</location>
    </subcellularLocation>
</comment>
<comment type="similarity">
    <text evidence="1">Belongs to the thioester dehydratase family. FabZ subfamily.</text>
</comment>
<evidence type="ECO:0000255" key="1">
    <source>
        <dbReference type="HAMAP-Rule" id="MF_00406"/>
    </source>
</evidence>
<keyword id="KW-0963">Cytoplasm</keyword>
<keyword id="KW-0441">Lipid A biosynthesis</keyword>
<keyword id="KW-0444">Lipid biosynthesis</keyword>
<keyword id="KW-0443">Lipid metabolism</keyword>
<keyword id="KW-0456">Lyase</keyword>
<keyword id="KW-1185">Reference proteome</keyword>
<gene>
    <name evidence="1" type="primary">fabZ</name>
    <name type="ordered locus">RSc1415</name>
    <name type="ORF">RS05277</name>
</gene>
<dbReference type="EC" id="4.2.1.59" evidence="1"/>
<dbReference type="EMBL" id="AL646052">
    <property type="protein sequence ID" value="CAD15117.1"/>
    <property type="molecule type" value="Genomic_DNA"/>
</dbReference>
<dbReference type="RefSeq" id="WP_011001364.1">
    <property type="nucleotide sequence ID" value="NC_003295.1"/>
</dbReference>
<dbReference type="SMR" id="Q8XZI0"/>
<dbReference type="STRING" id="267608.RSc1415"/>
<dbReference type="EnsemblBacteria" id="CAD15117">
    <property type="protein sequence ID" value="CAD15117"/>
    <property type="gene ID" value="RSc1415"/>
</dbReference>
<dbReference type="KEGG" id="rso:RSc1415"/>
<dbReference type="eggNOG" id="COG0764">
    <property type="taxonomic scope" value="Bacteria"/>
</dbReference>
<dbReference type="HOGENOM" id="CLU_078912_1_0_4"/>
<dbReference type="Proteomes" id="UP000001436">
    <property type="component" value="Chromosome"/>
</dbReference>
<dbReference type="GO" id="GO:0005737">
    <property type="term" value="C:cytoplasm"/>
    <property type="evidence" value="ECO:0007669"/>
    <property type="project" value="UniProtKB-SubCell"/>
</dbReference>
<dbReference type="GO" id="GO:0016020">
    <property type="term" value="C:membrane"/>
    <property type="evidence" value="ECO:0007669"/>
    <property type="project" value="GOC"/>
</dbReference>
<dbReference type="GO" id="GO:0019171">
    <property type="term" value="F:(3R)-hydroxyacyl-[acyl-carrier-protein] dehydratase activity"/>
    <property type="evidence" value="ECO:0007669"/>
    <property type="project" value="UniProtKB-EC"/>
</dbReference>
<dbReference type="GO" id="GO:0006633">
    <property type="term" value="P:fatty acid biosynthetic process"/>
    <property type="evidence" value="ECO:0007669"/>
    <property type="project" value="UniProtKB-UniRule"/>
</dbReference>
<dbReference type="GO" id="GO:0009245">
    <property type="term" value="P:lipid A biosynthetic process"/>
    <property type="evidence" value="ECO:0007669"/>
    <property type="project" value="UniProtKB-UniRule"/>
</dbReference>
<dbReference type="CDD" id="cd01288">
    <property type="entry name" value="FabZ"/>
    <property type="match status" value="1"/>
</dbReference>
<dbReference type="FunFam" id="3.10.129.10:FF:000001">
    <property type="entry name" value="3-hydroxyacyl-[acyl-carrier-protein] dehydratase FabZ"/>
    <property type="match status" value="1"/>
</dbReference>
<dbReference type="Gene3D" id="3.10.129.10">
    <property type="entry name" value="Hotdog Thioesterase"/>
    <property type="match status" value="1"/>
</dbReference>
<dbReference type="HAMAP" id="MF_00406">
    <property type="entry name" value="FabZ"/>
    <property type="match status" value="1"/>
</dbReference>
<dbReference type="InterPro" id="IPR013114">
    <property type="entry name" value="FabA_FabZ"/>
</dbReference>
<dbReference type="InterPro" id="IPR010084">
    <property type="entry name" value="FabZ"/>
</dbReference>
<dbReference type="InterPro" id="IPR029069">
    <property type="entry name" value="HotDog_dom_sf"/>
</dbReference>
<dbReference type="NCBIfam" id="TIGR01750">
    <property type="entry name" value="fabZ"/>
    <property type="match status" value="1"/>
</dbReference>
<dbReference type="NCBIfam" id="NF000582">
    <property type="entry name" value="PRK00006.1"/>
    <property type="match status" value="1"/>
</dbReference>
<dbReference type="PANTHER" id="PTHR30272">
    <property type="entry name" value="3-HYDROXYACYL-[ACYL-CARRIER-PROTEIN] DEHYDRATASE"/>
    <property type="match status" value="1"/>
</dbReference>
<dbReference type="PANTHER" id="PTHR30272:SF1">
    <property type="entry name" value="3-HYDROXYACYL-[ACYL-CARRIER-PROTEIN] DEHYDRATASE"/>
    <property type="match status" value="1"/>
</dbReference>
<dbReference type="Pfam" id="PF07977">
    <property type="entry name" value="FabA"/>
    <property type="match status" value="1"/>
</dbReference>
<dbReference type="SUPFAM" id="SSF54637">
    <property type="entry name" value="Thioesterase/thiol ester dehydrase-isomerase"/>
    <property type="match status" value="1"/>
</dbReference>
<sequence>MTEPSAATTSLVSDFNIKKILELLPHRYPMLLVDRVLEMEPRKRIKAIKNVTFNEPFFNGHFPGHPVMPGVLMLEALAQTAALLTFGESNHKRQENQLYLFVSIDGARFKRQVTPGDQLVLNAELLRSKSGMWKFKVFATVDDEVAAEAEIMCAVREDKSKGDA</sequence>
<reference key="1">
    <citation type="journal article" date="2002" name="Nature">
        <title>Genome sequence of the plant pathogen Ralstonia solanacearum.</title>
        <authorList>
            <person name="Salanoubat M."/>
            <person name="Genin S."/>
            <person name="Artiguenave F."/>
            <person name="Gouzy J."/>
            <person name="Mangenot S."/>
            <person name="Arlat M."/>
            <person name="Billault A."/>
            <person name="Brottier P."/>
            <person name="Camus J.-C."/>
            <person name="Cattolico L."/>
            <person name="Chandler M."/>
            <person name="Choisne N."/>
            <person name="Claudel-Renard C."/>
            <person name="Cunnac S."/>
            <person name="Demange N."/>
            <person name="Gaspin C."/>
            <person name="Lavie M."/>
            <person name="Moisan A."/>
            <person name="Robert C."/>
            <person name="Saurin W."/>
            <person name="Schiex T."/>
            <person name="Siguier P."/>
            <person name="Thebault P."/>
            <person name="Whalen M."/>
            <person name="Wincker P."/>
            <person name="Levy M."/>
            <person name="Weissenbach J."/>
            <person name="Boucher C.A."/>
        </authorList>
    </citation>
    <scope>NUCLEOTIDE SEQUENCE [LARGE SCALE GENOMIC DNA]</scope>
    <source>
        <strain>ATCC BAA-1114 / GMI1000</strain>
    </source>
</reference>
<proteinExistence type="inferred from homology"/>
<accession>Q8XZI0</accession>
<organism>
    <name type="scientific">Ralstonia nicotianae (strain ATCC BAA-1114 / GMI1000)</name>
    <name type="common">Ralstonia solanacearum</name>
    <dbReference type="NCBI Taxonomy" id="267608"/>
    <lineage>
        <taxon>Bacteria</taxon>
        <taxon>Pseudomonadati</taxon>
        <taxon>Pseudomonadota</taxon>
        <taxon>Betaproteobacteria</taxon>
        <taxon>Burkholderiales</taxon>
        <taxon>Burkholderiaceae</taxon>
        <taxon>Ralstonia</taxon>
        <taxon>Ralstonia solanacearum species complex</taxon>
    </lineage>
</organism>
<protein>
    <recommendedName>
        <fullName evidence="1">3-hydroxyacyl-[acyl-carrier-protein] dehydratase FabZ</fullName>
        <ecNumber evidence="1">4.2.1.59</ecNumber>
    </recommendedName>
    <alternativeName>
        <fullName evidence="1">(3R)-hydroxymyristoyl-[acyl-carrier-protein] dehydratase</fullName>
        <shortName evidence="1">(3R)-hydroxymyristoyl-ACP dehydrase</shortName>
    </alternativeName>
    <alternativeName>
        <fullName evidence="1">Beta-hydroxyacyl-ACP dehydratase</fullName>
    </alternativeName>
</protein>
<feature type="chain" id="PRO_0000091716" description="3-hydroxyacyl-[acyl-carrier-protein] dehydratase FabZ">
    <location>
        <begin position="1"/>
        <end position="164"/>
    </location>
</feature>
<feature type="active site" evidence="1">
    <location>
        <position position="61"/>
    </location>
</feature>